<comment type="function">
    <text evidence="1">Catalyzes the hydrolytic cleavage of the carbon-nitrogen bond in imidazolone-5-propanoate to yield N-formimidoyl-L-glutamate. It is the third step in the universal histidine degradation pathway.</text>
</comment>
<comment type="catalytic activity">
    <reaction evidence="1">
        <text>4-imidazolone-5-propanoate + H2O = N-formimidoyl-L-glutamate</text>
        <dbReference type="Rhea" id="RHEA:23660"/>
        <dbReference type="ChEBI" id="CHEBI:15377"/>
        <dbReference type="ChEBI" id="CHEBI:58928"/>
        <dbReference type="ChEBI" id="CHEBI:77893"/>
        <dbReference type="EC" id="3.5.2.7"/>
    </reaction>
</comment>
<comment type="cofactor">
    <cofactor evidence="1">
        <name>Zn(2+)</name>
        <dbReference type="ChEBI" id="CHEBI:29105"/>
    </cofactor>
    <cofactor evidence="1">
        <name>Fe(3+)</name>
        <dbReference type="ChEBI" id="CHEBI:29034"/>
    </cofactor>
    <text evidence="1">Binds 1 zinc or iron ion per subunit.</text>
</comment>
<comment type="pathway">
    <text evidence="1">Amino-acid degradation; L-histidine degradation into L-glutamate; N-formimidoyl-L-glutamate from L-histidine: step 3/3.</text>
</comment>
<comment type="subcellular location">
    <subcellularLocation>
        <location evidence="1">Cytoplasm</location>
    </subcellularLocation>
</comment>
<comment type="similarity">
    <text evidence="1">Belongs to the metallo-dependent hydrolases superfamily. HutI family.</text>
</comment>
<keyword id="KW-0963">Cytoplasm</keyword>
<keyword id="KW-0369">Histidine metabolism</keyword>
<keyword id="KW-0378">Hydrolase</keyword>
<keyword id="KW-0408">Iron</keyword>
<keyword id="KW-0479">Metal-binding</keyword>
<keyword id="KW-1185">Reference proteome</keyword>
<keyword id="KW-0862">Zinc</keyword>
<sequence>MSSSTVITNIAALVTNDPSLGDHSPLGLVRDAAVVVEGDRVVWTGESSKAPATDNRVDADGRAVLPGFVDSHSHLLFAGDRTEEFNARMSGRPYSAGGIRTTVAATRAASDAELEAGLTRYLAEALRQGTTTFETKSGYGLTTADESRALRVAARHTDEVTFLGAHIVAPELADDPAAYVDLVTGEMLDACAPHARWIDVFCEKGAFDGDQARAILTAGKARGLHPRIHANQLSYGPGVRLAVELDAASADHCTHLTDADVDALANSRTVATLLPGAEFSTRAQWPDARRLIDAGATVALSTDCNPGSSFTSSVPFCIALAVRDMGMTPDEAVWSATAGGAAALRREDVGRLVPGAYADLTLLDAPSHVHLAYRPGVPLVAGVWRRGVRKV</sequence>
<evidence type="ECO:0000255" key="1">
    <source>
        <dbReference type="HAMAP-Rule" id="MF_00372"/>
    </source>
</evidence>
<protein>
    <recommendedName>
        <fullName evidence="1">Imidazolonepropionase</fullName>
        <ecNumber evidence="1">3.5.2.7</ecNumber>
    </recommendedName>
    <alternativeName>
        <fullName evidence="1">Imidazolone-5-propionate hydrolase</fullName>
    </alternativeName>
</protein>
<accession>Q9KZ78</accession>
<proteinExistence type="inferred from homology"/>
<organism>
    <name type="scientific">Streptomyces coelicolor (strain ATCC BAA-471 / A3(2) / M145)</name>
    <dbReference type="NCBI Taxonomy" id="100226"/>
    <lineage>
        <taxon>Bacteria</taxon>
        <taxon>Bacillati</taxon>
        <taxon>Actinomycetota</taxon>
        <taxon>Actinomycetes</taxon>
        <taxon>Kitasatosporales</taxon>
        <taxon>Streptomycetaceae</taxon>
        <taxon>Streptomyces</taxon>
        <taxon>Streptomyces albidoflavus group</taxon>
    </lineage>
</organism>
<name>HUTI_STRCO</name>
<dbReference type="EC" id="3.5.2.7" evidence="1"/>
<dbReference type="EMBL" id="AL939115">
    <property type="protein sequence ID" value="CAB89442.1"/>
    <property type="molecule type" value="Genomic_DNA"/>
</dbReference>
<dbReference type="RefSeq" id="NP_627290.1">
    <property type="nucleotide sequence ID" value="NC_003888.3"/>
</dbReference>
<dbReference type="RefSeq" id="WP_011028748.1">
    <property type="nucleotide sequence ID" value="NZ_VNID01000013.1"/>
</dbReference>
<dbReference type="SMR" id="Q9KZ78"/>
<dbReference type="STRING" id="100226.gene:17760685"/>
<dbReference type="PaxDb" id="100226-SCO3070"/>
<dbReference type="KEGG" id="sco:SCO3070"/>
<dbReference type="PATRIC" id="fig|100226.15.peg.3130"/>
<dbReference type="eggNOG" id="COG1228">
    <property type="taxonomic scope" value="Bacteria"/>
</dbReference>
<dbReference type="HOGENOM" id="CLU_041647_1_0_11"/>
<dbReference type="InParanoid" id="Q9KZ78"/>
<dbReference type="OrthoDB" id="9776455at2"/>
<dbReference type="PhylomeDB" id="Q9KZ78"/>
<dbReference type="UniPathway" id="UPA00379">
    <property type="reaction ID" value="UER00551"/>
</dbReference>
<dbReference type="Proteomes" id="UP000001973">
    <property type="component" value="Chromosome"/>
</dbReference>
<dbReference type="GO" id="GO:0005737">
    <property type="term" value="C:cytoplasm"/>
    <property type="evidence" value="ECO:0007669"/>
    <property type="project" value="UniProtKB-SubCell"/>
</dbReference>
<dbReference type="GO" id="GO:0050480">
    <property type="term" value="F:imidazolonepropionase activity"/>
    <property type="evidence" value="ECO:0000318"/>
    <property type="project" value="GO_Central"/>
</dbReference>
<dbReference type="GO" id="GO:0005506">
    <property type="term" value="F:iron ion binding"/>
    <property type="evidence" value="ECO:0007669"/>
    <property type="project" value="UniProtKB-UniRule"/>
</dbReference>
<dbReference type="GO" id="GO:0008270">
    <property type="term" value="F:zinc ion binding"/>
    <property type="evidence" value="ECO:0007669"/>
    <property type="project" value="UniProtKB-UniRule"/>
</dbReference>
<dbReference type="GO" id="GO:0006548">
    <property type="term" value="P:L-histidine catabolic process"/>
    <property type="evidence" value="ECO:0000318"/>
    <property type="project" value="GO_Central"/>
</dbReference>
<dbReference type="GO" id="GO:0019556">
    <property type="term" value="P:L-histidine catabolic process to glutamate and formamide"/>
    <property type="evidence" value="ECO:0007669"/>
    <property type="project" value="UniProtKB-UniPathway"/>
</dbReference>
<dbReference type="GO" id="GO:0019557">
    <property type="term" value="P:L-histidine catabolic process to glutamate and formate"/>
    <property type="evidence" value="ECO:0007669"/>
    <property type="project" value="UniProtKB-UniPathway"/>
</dbReference>
<dbReference type="CDD" id="cd01296">
    <property type="entry name" value="Imidazolone-5PH"/>
    <property type="match status" value="1"/>
</dbReference>
<dbReference type="FunFam" id="3.20.20.140:FF:000007">
    <property type="entry name" value="Imidazolonepropionase"/>
    <property type="match status" value="1"/>
</dbReference>
<dbReference type="Gene3D" id="3.20.20.140">
    <property type="entry name" value="Metal-dependent hydrolases"/>
    <property type="match status" value="1"/>
</dbReference>
<dbReference type="Gene3D" id="2.30.40.10">
    <property type="entry name" value="Urease, subunit C, domain 1"/>
    <property type="match status" value="1"/>
</dbReference>
<dbReference type="HAMAP" id="MF_00372">
    <property type="entry name" value="HutI"/>
    <property type="match status" value="1"/>
</dbReference>
<dbReference type="InterPro" id="IPR006680">
    <property type="entry name" value="Amidohydro-rel"/>
</dbReference>
<dbReference type="InterPro" id="IPR005920">
    <property type="entry name" value="HutI"/>
</dbReference>
<dbReference type="InterPro" id="IPR011059">
    <property type="entry name" value="Metal-dep_hydrolase_composite"/>
</dbReference>
<dbReference type="InterPro" id="IPR032466">
    <property type="entry name" value="Metal_Hydrolase"/>
</dbReference>
<dbReference type="NCBIfam" id="TIGR01224">
    <property type="entry name" value="hutI"/>
    <property type="match status" value="1"/>
</dbReference>
<dbReference type="PANTHER" id="PTHR42752">
    <property type="entry name" value="IMIDAZOLONEPROPIONASE"/>
    <property type="match status" value="1"/>
</dbReference>
<dbReference type="PANTHER" id="PTHR42752:SF1">
    <property type="entry name" value="IMIDAZOLONEPROPIONASE-RELATED"/>
    <property type="match status" value="1"/>
</dbReference>
<dbReference type="Pfam" id="PF01979">
    <property type="entry name" value="Amidohydro_1"/>
    <property type="match status" value="1"/>
</dbReference>
<dbReference type="SUPFAM" id="SSF51338">
    <property type="entry name" value="Composite domain of metallo-dependent hydrolases"/>
    <property type="match status" value="1"/>
</dbReference>
<dbReference type="SUPFAM" id="SSF51556">
    <property type="entry name" value="Metallo-dependent hydrolases"/>
    <property type="match status" value="1"/>
</dbReference>
<reference key="1">
    <citation type="journal article" date="2002" name="Nature">
        <title>Complete genome sequence of the model actinomycete Streptomyces coelicolor A3(2).</title>
        <authorList>
            <person name="Bentley S.D."/>
            <person name="Chater K.F."/>
            <person name="Cerdeno-Tarraga A.-M."/>
            <person name="Challis G.L."/>
            <person name="Thomson N.R."/>
            <person name="James K.D."/>
            <person name="Harris D.E."/>
            <person name="Quail M.A."/>
            <person name="Kieser H."/>
            <person name="Harper D."/>
            <person name="Bateman A."/>
            <person name="Brown S."/>
            <person name="Chandra G."/>
            <person name="Chen C.W."/>
            <person name="Collins M."/>
            <person name="Cronin A."/>
            <person name="Fraser A."/>
            <person name="Goble A."/>
            <person name="Hidalgo J."/>
            <person name="Hornsby T."/>
            <person name="Howarth S."/>
            <person name="Huang C.-H."/>
            <person name="Kieser T."/>
            <person name="Larke L."/>
            <person name="Murphy L.D."/>
            <person name="Oliver K."/>
            <person name="O'Neil S."/>
            <person name="Rabbinowitsch E."/>
            <person name="Rajandream M.A."/>
            <person name="Rutherford K.M."/>
            <person name="Rutter S."/>
            <person name="Seeger K."/>
            <person name="Saunders D."/>
            <person name="Sharp S."/>
            <person name="Squares R."/>
            <person name="Squares S."/>
            <person name="Taylor K."/>
            <person name="Warren T."/>
            <person name="Wietzorrek A."/>
            <person name="Woodward J.R."/>
            <person name="Barrell B.G."/>
            <person name="Parkhill J."/>
            <person name="Hopwood D.A."/>
        </authorList>
    </citation>
    <scope>NUCLEOTIDE SEQUENCE [LARGE SCALE GENOMIC DNA]</scope>
    <source>
        <strain>ATCC BAA-471 / A3(2) / M145</strain>
    </source>
</reference>
<gene>
    <name evidence="1" type="primary">hutI</name>
    <name type="ordered locus">SCO3070</name>
    <name type="ORF">SCE25.11c</name>
</gene>
<feature type="chain" id="PRO_0000306530" description="Imidazolonepropionase">
    <location>
        <begin position="1"/>
        <end position="391"/>
    </location>
</feature>
<feature type="binding site" evidence="1">
    <location>
        <position position="72"/>
    </location>
    <ligand>
        <name>Fe(3+)</name>
        <dbReference type="ChEBI" id="CHEBI:29034"/>
    </ligand>
</feature>
<feature type="binding site" evidence="1">
    <location>
        <position position="72"/>
    </location>
    <ligand>
        <name>Zn(2+)</name>
        <dbReference type="ChEBI" id="CHEBI:29105"/>
    </ligand>
</feature>
<feature type="binding site" evidence="1">
    <location>
        <position position="74"/>
    </location>
    <ligand>
        <name>Fe(3+)</name>
        <dbReference type="ChEBI" id="CHEBI:29034"/>
    </ligand>
</feature>
<feature type="binding site" evidence="1">
    <location>
        <position position="74"/>
    </location>
    <ligand>
        <name>Zn(2+)</name>
        <dbReference type="ChEBI" id="CHEBI:29105"/>
    </ligand>
</feature>
<feature type="binding site" evidence="1">
    <location>
        <position position="81"/>
    </location>
    <ligand>
        <name>4-imidazolone-5-propanoate</name>
        <dbReference type="ChEBI" id="CHEBI:77893"/>
    </ligand>
</feature>
<feature type="binding site" evidence="1">
    <location>
        <position position="139"/>
    </location>
    <ligand>
        <name>4-imidazolone-5-propanoate</name>
        <dbReference type="ChEBI" id="CHEBI:77893"/>
    </ligand>
</feature>
<feature type="binding site" evidence="1">
    <location>
        <position position="139"/>
    </location>
    <ligand>
        <name>N-formimidoyl-L-glutamate</name>
        <dbReference type="ChEBI" id="CHEBI:58928"/>
    </ligand>
</feature>
<feature type="binding site" evidence="1">
    <location>
        <position position="166"/>
    </location>
    <ligand>
        <name>4-imidazolone-5-propanoate</name>
        <dbReference type="ChEBI" id="CHEBI:77893"/>
    </ligand>
</feature>
<feature type="binding site" evidence="1">
    <location>
        <position position="229"/>
    </location>
    <ligand>
        <name>Fe(3+)</name>
        <dbReference type="ChEBI" id="CHEBI:29034"/>
    </ligand>
</feature>
<feature type="binding site" evidence="1">
    <location>
        <position position="229"/>
    </location>
    <ligand>
        <name>Zn(2+)</name>
        <dbReference type="ChEBI" id="CHEBI:29105"/>
    </ligand>
</feature>
<feature type="binding site" evidence="1">
    <location>
        <position position="232"/>
    </location>
    <ligand>
        <name>4-imidazolone-5-propanoate</name>
        <dbReference type="ChEBI" id="CHEBI:77893"/>
    </ligand>
</feature>
<feature type="binding site" evidence="1">
    <location>
        <position position="303"/>
    </location>
    <ligand>
        <name>Fe(3+)</name>
        <dbReference type="ChEBI" id="CHEBI:29034"/>
    </ligand>
</feature>
<feature type="binding site" evidence="1">
    <location>
        <position position="303"/>
    </location>
    <ligand>
        <name>Zn(2+)</name>
        <dbReference type="ChEBI" id="CHEBI:29105"/>
    </ligand>
</feature>
<feature type="binding site" evidence="1">
    <location>
        <position position="305"/>
    </location>
    <ligand>
        <name>N-formimidoyl-L-glutamate</name>
        <dbReference type="ChEBI" id="CHEBI:58928"/>
    </ligand>
</feature>
<feature type="binding site" evidence="1">
    <location>
        <position position="307"/>
    </location>
    <ligand>
        <name>N-formimidoyl-L-glutamate</name>
        <dbReference type="ChEBI" id="CHEBI:58928"/>
    </ligand>
</feature>
<feature type="binding site" evidence="1">
    <location>
        <position position="308"/>
    </location>
    <ligand>
        <name>4-imidazolone-5-propanoate</name>
        <dbReference type="ChEBI" id="CHEBI:77893"/>
    </ligand>
</feature>